<dbReference type="EMBL" id="AB070238">
    <property type="protein sequence ID" value="BAB85125.1"/>
    <property type="molecule type" value="Genomic_DNA"/>
</dbReference>
<dbReference type="EMBL" id="AK095734">
    <property type="protein sequence ID" value="BAC04618.1"/>
    <property type="molecule type" value="mRNA"/>
</dbReference>
<dbReference type="EMBL" id="AC125494">
    <property type="status" value="NOT_ANNOTATED_CDS"/>
    <property type="molecule type" value="Genomic_DNA"/>
</dbReference>
<dbReference type="EMBL" id="CH471116">
    <property type="protein sequence ID" value="EAW88756.1"/>
    <property type="molecule type" value="Genomic_DNA"/>
</dbReference>
<dbReference type="EMBL" id="BC053361">
    <property type="protein sequence ID" value="AAH53361.1"/>
    <property type="molecule type" value="mRNA"/>
</dbReference>
<dbReference type="EMBL" id="U80738">
    <property type="protein sequence ID" value="AAB91437.1"/>
    <property type="molecule type" value="mRNA"/>
</dbReference>
<dbReference type="CCDS" id="CCDS31732.1">
    <molecule id="Q8TF68-3"/>
</dbReference>
<dbReference type="CCDS" id="CCDS44817.1">
    <molecule id="Q8TF68-1"/>
</dbReference>
<dbReference type="CCDS" id="CCDS8557.1">
    <molecule id="Q8TF68-2"/>
</dbReference>
<dbReference type="RefSeq" id="NP_001035009.1">
    <molecule id="Q8TF68-3"/>
    <property type="nucleotide sequence ID" value="NM_001039920.3"/>
</dbReference>
<dbReference type="RefSeq" id="NP_001129206.1">
    <molecule id="Q8TF68-1"/>
    <property type="nucleotide sequence ID" value="NM_001135734.3"/>
</dbReference>
<dbReference type="RefSeq" id="NP_001372668.1">
    <molecule id="Q8TF68-2"/>
    <property type="nucleotide sequence ID" value="NM_001385739.1"/>
</dbReference>
<dbReference type="RefSeq" id="NP_001372669.1">
    <molecule id="Q8TF68-2"/>
    <property type="nucleotide sequence ID" value="NM_001385740.1"/>
</dbReference>
<dbReference type="RefSeq" id="NP_001372679.1">
    <molecule id="Q8TF68-1"/>
    <property type="nucleotide sequence ID" value="NM_001385750.1"/>
</dbReference>
<dbReference type="RefSeq" id="NP_001372680.1">
    <molecule id="Q8TF68-1"/>
    <property type="nucleotide sequence ID" value="NM_001385751.1"/>
</dbReference>
<dbReference type="RefSeq" id="NP_001372681.1">
    <molecule id="Q8TF68-1"/>
    <property type="nucleotide sequence ID" value="NM_001385752.1"/>
</dbReference>
<dbReference type="RefSeq" id="NP_001372682.1">
    <molecule id="Q8TF68-1"/>
    <property type="nucleotide sequence ID" value="NM_001385753.1"/>
</dbReference>
<dbReference type="RefSeq" id="NP_001372683.1">
    <molecule id="Q8TF68-1"/>
    <property type="nucleotide sequence ID" value="NM_001385754.1"/>
</dbReference>
<dbReference type="RefSeq" id="NP_001372684.1">
    <molecule id="Q8TF68-1"/>
    <property type="nucleotide sequence ID" value="NM_001385755.1"/>
</dbReference>
<dbReference type="RefSeq" id="NP_001372685.1">
    <molecule id="Q8TF68-1"/>
    <property type="nucleotide sequence ID" value="NM_001385756.1"/>
</dbReference>
<dbReference type="RefSeq" id="NP_001372686.1">
    <molecule id="Q8TF68-1"/>
    <property type="nucleotide sequence ID" value="NM_001385757.1"/>
</dbReference>
<dbReference type="RefSeq" id="NP_001372702.1">
    <molecule id="Q8TF68-2"/>
    <property type="nucleotide sequence ID" value="NM_001385773.1"/>
</dbReference>
<dbReference type="RefSeq" id="NP_001372703.1">
    <molecule id="Q8TF68-2"/>
    <property type="nucleotide sequence ID" value="NM_001385774.1"/>
</dbReference>
<dbReference type="RefSeq" id="NP_001372704.1">
    <molecule id="Q8TF68-2"/>
    <property type="nucleotide sequence ID" value="NM_001385775.1"/>
</dbReference>
<dbReference type="RefSeq" id="NP_001372705.1">
    <molecule id="Q8TF68-2"/>
    <property type="nucleotide sequence ID" value="NM_001385776.1"/>
</dbReference>
<dbReference type="RefSeq" id="NP_001372706.1">
    <molecule id="Q8TF68-2"/>
    <property type="nucleotide sequence ID" value="NM_001385777.1"/>
</dbReference>
<dbReference type="RefSeq" id="NP_001372707.1">
    <molecule id="Q8TF68-2"/>
    <property type="nucleotide sequence ID" value="NM_001385778.1"/>
</dbReference>
<dbReference type="RefSeq" id="NP_001372708.1">
    <molecule id="Q8TF68-2"/>
    <property type="nucleotide sequence ID" value="NM_001385779.1"/>
</dbReference>
<dbReference type="RefSeq" id="NP_001372709.1">
    <molecule id="Q8TF68-2"/>
    <property type="nucleotide sequence ID" value="NM_001385780.1"/>
</dbReference>
<dbReference type="RefSeq" id="NP_001372710.1">
    <molecule id="Q8TF68-2"/>
    <property type="nucleotide sequence ID" value="NM_001385781.1"/>
</dbReference>
<dbReference type="RefSeq" id="NP_001372711.1">
    <molecule id="Q8TF68-2"/>
    <property type="nucleotide sequence ID" value="NM_001385782.1"/>
</dbReference>
<dbReference type="RefSeq" id="NP_001372712.1">
    <molecule id="Q8TF68-2"/>
    <property type="nucleotide sequence ID" value="NM_001385783.1"/>
</dbReference>
<dbReference type="RefSeq" id="NP_001372713.1">
    <molecule id="Q8TF68-2"/>
    <property type="nucleotide sequence ID" value="NM_001385784.1"/>
</dbReference>
<dbReference type="RefSeq" id="NP_001372714.1">
    <molecule id="Q8TF68-2"/>
    <property type="nucleotide sequence ID" value="NM_001385785.1"/>
</dbReference>
<dbReference type="RefSeq" id="NP_001372715.1">
    <molecule id="Q8TF68-2"/>
    <property type="nucleotide sequence ID" value="NM_001385786.1"/>
</dbReference>
<dbReference type="RefSeq" id="NP_001372727.1">
    <molecule id="Q8TF68-3"/>
    <property type="nucleotide sequence ID" value="NM_001385798.1"/>
</dbReference>
<dbReference type="RefSeq" id="NP_001372728.1">
    <molecule id="Q8TF68-3"/>
    <property type="nucleotide sequence ID" value="NM_001385799.1"/>
</dbReference>
<dbReference type="RefSeq" id="NP_001372729.1">
    <molecule id="Q8TF68-3"/>
    <property type="nucleotide sequence ID" value="NM_001385800.1"/>
</dbReference>
<dbReference type="RefSeq" id="NP_597733.2">
    <molecule id="Q8TF68-2"/>
    <property type="nucleotide sequence ID" value="NM_133476.4"/>
</dbReference>
<dbReference type="RefSeq" id="XP_016874430.1">
    <property type="nucleotide sequence ID" value="XM_017018941.1"/>
</dbReference>
<dbReference type="RefSeq" id="XP_016874431.1">
    <property type="nucleotide sequence ID" value="XM_017018942.1"/>
</dbReference>
<dbReference type="RefSeq" id="XP_016874432.1">
    <property type="nucleotide sequence ID" value="XM_017018943.1"/>
</dbReference>
<dbReference type="RefSeq" id="XP_016874438.1">
    <property type="nucleotide sequence ID" value="XM_017018949.1"/>
</dbReference>
<dbReference type="RefSeq" id="XP_016874439.1">
    <property type="nucleotide sequence ID" value="XM_017018950.1"/>
</dbReference>
<dbReference type="SMR" id="Q8TF68"/>
<dbReference type="BioGRID" id="128100">
    <property type="interactions" value="75"/>
</dbReference>
<dbReference type="FunCoup" id="Q8TF68">
    <property type="interactions" value="3530"/>
</dbReference>
<dbReference type="IntAct" id="Q8TF68">
    <property type="interactions" value="18"/>
</dbReference>
<dbReference type="MINT" id="Q8TF68"/>
<dbReference type="STRING" id="9606.ENSP00000380019"/>
<dbReference type="GlyCosmos" id="Q8TF68">
    <property type="glycosylation" value="7 sites, 2 glycans"/>
</dbReference>
<dbReference type="GlyGen" id="Q8TF68">
    <property type="glycosylation" value="10 sites, 2 O-linked glycans (10 sites)"/>
</dbReference>
<dbReference type="iPTMnet" id="Q8TF68"/>
<dbReference type="PhosphoSitePlus" id="Q8TF68"/>
<dbReference type="SwissPalm" id="Q8TF68"/>
<dbReference type="BioMuta" id="ZNF384"/>
<dbReference type="DMDM" id="296453052"/>
<dbReference type="jPOST" id="Q8TF68"/>
<dbReference type="MassIVE" id="Q8TF68"/>
<dbReference type="PaxDb" id="9606-ENSP00000380019"/>
<dbReference type="PeptideAtlas" id="Q8TF68"/>
<dbReference type="ProteomicsDB" id="74568">
    <molecule id="Q8TF68-1"/>
</dbReference>
<dbReference type="ProteomicsDB" id="74569">
    <molecule id="Q8TF68-2"/>
</dbReference>
<dbReference type="ProteomicsDB" id="74570">
    <molecule id="Q8TF68-3"/>
</dbReference>
<dbReference type="Pumba" id="Q8TF68"/>
<dbReference type="Antibodypedia" id="1314">
    <property type="antibodies" value="202 antibodies from 25 providers"/>
</dbReference>
<dbReference type="DNASU" id="171017"/>
<dbReference type="Ensembl" id="ENST00000319770.7">
    <molecule id="Q8TF68-2"/>
    <property type="protein sequence ID" value="ENSP00000321650.4"/>
    <property type="gene ID" value="ENSG00000126746.19"/>
</dbReference>
<dbReference type="Ensembl" id="ENST00000355772.8">
    <molecule id="Q8TF68-3"/>
    <property type="protein sequence ID" value="ENSP00000348018.4"/>
    <property type="gene ID" value="ENSG00000126746.19"/>
</dbReference>
<dbReference type="Ensembl" id="ENST00000361959.7">
    <molecule id="Q8TF68-1"/>
    <property type="protein sequence ID" value="ENSP00000354592.3"/>
    <property type="gene ID" value="ENSG00000126746.19"/>
</dbReference>
<dbReference type="Ensembl" id="ENST00000396801.7">
    <molecule id="Q8TF68-1"/>
    <property type="protein sequence ID" value="ENSP00000380019.3"/>
    <property type="gene ID" value="ENSG00000126746.19"/>
</dbReference>
<dbReference type="GeneID" id="171017"/>
<dbReference type="KEGG" id="hsa:171017"/>
<dbReference type="UCSC" id="uc001qqa.4">
    <molecule id="Q8TF68-1"/>
    <property type="organism name" value="human"/>
</dbReference>
<dbReference type="AGR" id="HGNC:11955"/>
<dbReference type="CTD" id="171017"/>
<dbReference type="DisGeNET" id="171017"/>
<dbReference type="GeneCards" id="ZNF384"/>
<dbReference type="HGNC" id="HGNC:11955">
    <property type="gene designation" value="ZNF384"/>
</dbReference>
<dbReference type="HPA" id="ENSG00000126746">
    <property type="expression patterns" value="Low tissue specificity"/>
</dbReference>
<dbReference type="MIM" id="609951">
    <property type="type" value="gene"/>
</dbReference>
<dbReference type="neXtProt" id="NX_Q8TF68"/>
<dbReference type="OpenTargets" id="ENSG00000126746"/>
<dbReference type="PharmGKB" id="PA36644"/>
<dbReference type="VEuPathDB" id="HostDB:ENSG00000126746"/>
<dbReference type="eggNOG" id="KOG1721">
    <property type="taxonomic scope" value="Eukaryota"/>
</dbReference>
<dbReference type="GeneTree" id="ENSGT00940000156904"/>
<dbReference type="HOGENOM" id="CLU_028030_0_0_1"/>
<dbReference type="InParanoid" id="Q8TF68"/>
<dbReference type="OMA" id="SICSHAY"/>
<dbReference type="OrthoDB" id="5305647at2759"/>
<dbReference type="PAN-GO" id="Q8TF68">
    <property type="GO annotations" value="4 GO annotations based on evolutionary models"/>
</dbReference>
<dbReference type="PhylomeDB" id="Q8TF68"/>
<dbReference type="TreeFam" id="TF336115"/>
<dbReference type="PathwayCommons" id="Q8TF68"/>
<dbReference type="SignaLink" id="Q8TF68"/>
<dbReference type="SIGNOR" id="Q8TF68"/>
<dbReference type="BioGRID-ORCS" id="171017">
    <property type="hits" value="25 hits in 1181 CRISPR screens"/>
</dbReference>
<dbReference type="ChiTaRS" id="ZNF384">
    <property type="organism name" value="human"/>
</dbReference>
<dbReference type="GeneWiki" id="ZNF384"/>
<dbReference type="GenomeRNAi" id="171017"/>
<dbReference type="Pharos" id="Q8TF68">
    <property type="development level" value="Tbio"/>
</dbReference>
<dbReference type="PRO" id="PR:Q8TF68"/>
<dbReference type="Proteomes" id="UP000005640">
    <property type="component" value="Chromosome 12"/>
</dbReference>
<dbReference type="RNAct" id="Q8TF68">
    <property type="molecule type" value="protein"/>
</dbReference>
<dbReference type="Bgee" id="ENSG00000126746">
    <property type="expression patterns" value="Expressed in body of uterus and 201 other cell types or tissues"/>
</dbReference>
<dbReference type="ExpressionAtlas" id="Q8TF68">
    <property type="expression patterns" value="baseline and differential"/>
</dbReference>
<dbReference type="GO" id="GO:0005634">
    <property type="term" value="C:nucleus"/>
    <property type="evidence" value="ECO:0000318"/>
    <property type="project" value="GO_Central"/>
</dbReference>
<dbReference type="GO" id="GO:1990837">
    <property type="term" value="F:sequence-specific double-stranded DNA binding"/>
    <property type="evidence" value="ECO:0000314"/>
    <property type="project" value="ARUK-UCL"/>
</dbReference>
<dbReference type="GO" id="GO:0008270">
    <property type="term" value="F:zinc ion binding"/>
    <property type="evidence" value="ECO:0007669"/>
    <property type="project" value="UniProtKB-KW"/>
</dbReference>
<dbReference type="GO" id="GO:0006357">
    <property type="term" value="P:regulation of transcription by RNA polymerase II"/>
    <property type="evidence" value="ECO:0000318"/>
    <property type="project" value="GO_Central"/>
</dbReference>
<dbReference type="FunFam" id="3.30.160.60:FF:000158">
    <property type="entry name" value="Zinc finger protein 362"/>
    <property type="match status" value="1"/>
</dbReference>
<dbReference type="FunFam" id="3.30.160.60:FF:000549">
    <property type="entry name" value="zinc finger protein 384 isoform X1"/>
    <property type="match status" value="2"/>
</dbReference>
<dbReference type="FunFam" id="3.30.160.60:FF:000544">
    <property type="entry name" value="zinc finger protein 384 isoform X3"/>
    <property type="match status" value="2"/>
</dbReference>
<dbReference type="FunFam" id="3.30.160.60:FF:000216">
    <property type="entry name" value="Zinc finger protein 384 like"/>
    <property type="match status" value="1"/>
</dbReference>
<dbReference type="FunFam" id="3.30.160.60:FF:000369">
    <property type="entry name" value="Zinc finger protein 384 like"/>
    <property type="match status" value="1"/>
</dbReference>
<dbReference type="Gene3D" id="3.30.160.60">
    <property type="entry name" value="Classic Zinc Finger"/>
    <property type="match status" value="7"/>
</dbReference>
<dbReference type="InterPro" id="IPR050758">
    <property type="entry name" value="Znf_C2H2-type"/>
</dbReference>
<dbReference type="InterPro" id="IPR036236">
    <property type="entry name" value="Znf_C2H2_sf"/>
</dbReference>
<dbReference type="InterPro" id="IPR013087">
    <property type="entry name" value="Znf_C2H2_type"/>
</dbReference>
<dbReference type="PANTHER" id="PTHR23234:SF10">
    <property type="entry name" value="RIKEN CDNA 6720489N17 GENE-RELATED"/>
    <property type="match status" value="1"/>
</dbReference>
<dbReference type="PANTHER" id="PTHR23234">
    <property type="entry name" value="ZNF44 PROTEIN"/>
    <property type="match status" value="1"/>
</dbReference>
<dbReference type="Pfam" id="PF00096">
    <property type="entry name" value="zf-C2H2"/>
    <property type="match status" value="6"/>
</dbReference>
<dbReference type="Pfam" id="PF13912">
    <property type="entry name" value="zf-C2H2_6"/>
    <property type="match status" value="1"/>
</dbReference>
<dbReference type="SMART" id="SM00355">
    <property type="entry name" value="ZnF_C2H2"/>
    <property type="match status" value="8"/>
</dbReference>
<dbReference type="SUPFAM" id="SSF57667">
    <property type="entry name" value="beta-beta-alpha zinc fingers"/>
    <property type="match status" value="5"/>
</dbReference>
<dbReference type="PROSITE" id="PS00028">
    <property type="entry name" value="ZINC_FINGER_C2H2_1"/>
    <property type="match status" value="8"/>
</dbReference>
<dbReference type="PROSITE" id="PS50157">
    <property type="entry name" value="ZINC_FINGER_C2H2_2"/>
    <property type="match status" value="8"/>
</dbReference>
<comment type="function">
    <text evidence="1">Transcription factor that binds the consensus DNA sequence [GC]AAAAA. Seems to bind and regulate the promoters of MMP1, MMP3, MMP7 and COL1A1 (By similarity).</text>
</comment>
<comment type="subunit">
    <text evidence="1">Interacts with BCAR1.</text>
</comment>
<comment type="subcellular location">
    <subcellularLocation>
        <location evidence="1">Nucleus</location>
    </subcellularLocation>
</comment>
<comment type="alternative products">
    <event type="alternative splicing"/>
    <isoform>
        <id>Q8TF68-1</id>
        <name>1</name>
        <sequence type="displayed"/>
    </isoform>
    <isoform>
        <id>Q8TF68-2</id>
        <name>2</name>
        <sequence type="described" ref="VSP_006920"/>
    </isoform>
    <isoform>
        <id>Q8TF68-3</id>
        <name>3</name>
        <sequence type="described" ref="VSP_040314 VSP_040315"/>
    </isoform>
    <text>Additional isoforms seem to exist.</text>
</comment>
<comment type="similarity">
    <text evidence="6">Belongs to the krueppel C2H2-type zinc-finger protein family.</text>
</comment>
<comment type="online information" name="Atlas of Genetics and Cytogenetics in Oncology and Haematology">
    <link uri="https://atlasgeneticsoncology.org/gene/42881/ZNF384"/>
</comment>
<accession>Q8TF68</accession>
<accession>O15407</accession>
<accession>Q7Z722</accession>
<accession>Q8N938</accession>
<proteinExistence type="evidence at protein level"/>
<reference key="1">
    <citation type="submission" date="2001-08" db="EMBL/GenBank/DDBJ databases">
        <authorList>
            <person name="Matsuo M.Y."/>
        </authorList>
    </citation>
    <scope>NUCLEOTIDE SEQUENCE [GENOMIC DNA] (ISOFORM 1)</scope>
</reference>
<reference key="2">
    <citation type="journal article" date="2004" name="Nat. Genet.">
        <title>Complete sequencing and characterization of 21,243 full-length human cDNAs.</title>
        <authorList>
            <person name="Ota T."/>
            <person name="Suzuki Y."/>
            <person name="Nishikawa T."/>
            <person name="Otsuki T."/>
            <person name="Sugiyama T."/>
            <person name="Irie R."/>
            <person name="Wakamatsu A."/>
            <person name="Hayashi K."/>
            <person name="Sato H."/>
            <person name="Nagai K."/>
            <person name="Kimura K."/>
            <person name="Makita H."/>
            <person name="Sekine M."/>
            <person name="Obayashi M."/>
            <person name="Nishi T."/>
            <person name="Shibahara T."/>
            <person name="Tanaka T."/>
            <person name="Ishii S."/>
            <person name="Yamamoto J."/>
            <person name="Saito K."/>
            <person name="Kawai Y."/>
            <person name="Isono Y."/>
            <person name="Nakamura Y."/>
            <person name="Nagahari K."/>
            <person name="Murakami K."/>
            <person name="Yasuda T."/>
            <person name="Iwayanagi T."/>
            <person name="Wagatsuma M."/>
            <person name="Shiratori A."/>
            <person name="Sudo H."/>
            <person name="Hosoiri T."/>
            <person name="Kaku Y."/>
            <person name="Kodaira H."/>
            <person name="Kondo H."/>
            <person name="Sugawara M."/>
            <person name="Takahashi M."/>
            <person name="Kanda K."/>
            <person name="Yokoi T."/>
            <person name="Furuya T."/>
            <person name="Kikkawa E."/>
            <person name="Omura Y."/>
            <person name="Abe K."/>
            <person name="Kamihara K."/>
            <person name="Katsuta N."/>
            <person name="Sato K."/>
            <person name="Tanikawa M."/>
            <person name="Yamazaki M."/>
            <person name="Ninomiya K."/>
            <person name="Ishibashi T."/>
            <person name="Yamashita H."/>
            <person name="Murakawa K."/>
            <person name="Fujimori K."/>
            <person name="Tanai H."/>
            <person name="Kimata M."/>
            <person name="Watanabe M."/>
            <person name="Hiraoka S."/>
            <person name="Chiba Y."/>
            <person name="Ishida S."/>
            <person name="Ono Y."/>
            <person name="Takiguchi S."/>
            <person name="Watanabe S."/>
            <person name="Yosida M."/>
            <person name="Hotuta T."/>
            <person name="Kusano J."/>
            <person name="Kanehori K."/>
            <person name="Takahashi-Fujii A."/>
            <person name="Hara H."/>
            <person name="Tanase T.-O."/>
            <person name="Nomura Y."/>
            <person name="Togiya S."/>
            <person name="Komai F."/>
            <person name="Hara R."/>
            <person name="Takeuchi K."/>
            <person name="Arita M."/>
            <person name="Imose N."/>
            <person name="Musashino K."/>
            <person name="Yuuki H."/>
            <person name="Oshima A."/>
            <person name="Sasaki N."/>
            <person name="Aotsuka S."/>
            <person name="Yoshikawa Y."/>
            <person name="Matsunawa H."/>
            <person name="Ichihara T."/>
            <person name="Shiohata N."/>
            <person name="Sano S."/>
            <person name="Moriya S."/>
            <person name="Momiyama H."/>
            <person name="Satoh N."/>
            <person name="Takami S."/>
            <person name="Terashima Y."/>
            <person name="Suzuki O."/>
            <person name="Nakagawa S."/>
            <person name="Senoh A."/>
            <person name="Mizoguchi H."/>
            <person name="Goto Y."/>
            <person name="Shimizu F."/>
            <person name="Wakebe H."/>
            <person name="Hishigaki H."/>
            <person name="Watanabe T."/>
            <person name="Sugiyama A."/>
            <person name="Takemoto M."/>
            <person name="Kawakami B."/>
            <person name="Yamazaki M."/>
            <person name="Watanabe K."/>
            <person name="Kumagai A."/>
            <person name="Itakura S."/>
            <person name="Fukuzumi Y."/>
            <person name="Fujimori Y."/>
            <person name="Komiyama M."/>
            <person name="Tashiro H."/>
            <person name="Tanigami A."/>
            <person name="Fujiwara T."/>
            <person name="Ono T."/>
            <person name="Yamada K."/>
            <person name="Fujii Y."/>
            <person name="Ozaki K."/>
            <person name="Hirao M."/>
            <person name="Ohmori Y."/>
            <person name="Kawabata A."/>
            <person name="Hikiji T."/>
            <person name="Kobatake N."/>
            <person name="Inagaki H."/>
            <person name="Ikema Y."/>
            <person name="Okamoto S."/>
            <person name="Okitani R."/>
            <person name="Kawakami T."/>
            <person name="Noguchi S."/>
            <person name="Itoh T."/>
            <person name="Shigeta K."/>
            <person name="Senba T."/>
            <person name="Matsumura K."/>
            <person name="Nakajima Y."/>
            <person name="Mizuno T."/>
            <person name="Morinaga M."/>
            <person name="Sasaki M."/>
            <person name="Togashi T."/>
            <person name="Oyama M."/>
            <person name="Hata H."/>
            <person name="Watanabe M."/>
            <person name="Komatsu T."/>
            <person name="Mizushima-Sugano J."/>
            <person name="Satoh T."/>
            <person name="Shirai Y."/>
            <person name="Takahashi Y."/>
            <person name="Nakagawa K."/>
            <person name="Okumura K."/>
            <person name="Nagase T."/>
            <person name="Nomura N."/>
            <person name="Kikuchi H."/>
            <person name="Masuho Y."/>
            <person name="Yamashita R."/>
            <person name="Nakai K."/>
            <person name="Yada T."/>
            <person name="Nakamura Y."/>
            <person name="Ohara O."/>
            <person name="Isogai T."/>
            <person name="Sugano S."/>
        </authorList>
    </citation>
    <scope>NUCLEOTIDE SEQUENCE [LARGE SCALE MRNA] (ISOFORM 2)</scope>
    <source>
        <tissue>Brain</tissue>
    </source>
</reference>
<reference key="3">
    <citation type="journal article" date="2006" name="Nature">
        <title>The finished DNA sequence of human chromosome 12.</title>
        <authorList>
            <person name="Scherer S.E."/>
            <person name="Muzny D.M."/>
            <person name="Buhay C.J."/>
            <person name="Chen R."/>
            <person name="Cree A."/>
            <person name="Ding Y."/>
            <person name="Dugan-Rocha S."/>
            <person name="Gill R."/>
            <person name="Gunaratne P."/>
            <person name="Harris R.A."/>
            <person name="Hawes A.C."/>
            <person name="Hernandez J."/>
            <person name="Hodgson A.V."/>
            <person name="Hume J."/>
            <person name="Jackson A."/>
            <person name="Khan Z.M."/>
            <person name="Kovar-Smith C."/>
            <person name="Lewis L.R."/>
            <person name="Lozado R.J."/>
            <person name="Metzker M.L."/>
            <person name="Milosavljevic A."/>
            <person name="Miner G.R."/>
            <person name="Montgomery K.T."/>
            <person name="Morgan M.B."/>
            <person name="Nazareth L.V."/>
            <person name="Scott G."/>
            <person name="Sodergren E."/>
            <person name="Song X.-Z."/>
            <person name="Steffen D."/>
            <person name="Lovering R.C."/>
            <person name="Wheeler D.A."/>
            <person name="Worley K.C."/>
            <person name="Yuan Y."/>
            <person name="Zhang Z."/>
            <person name="Adams C.Q."/>
            <person name="Ansari-Lari M.A."/>
            <person name="Ayele M."/>
            <person name="Brown M.J."/>
            <person name="Chen G."/>
            <person name="Chen Z."/>
            <person name="Clerc-Blankenburg K.P."/>
            <person name="Davis C."/>
            <person name="Delgado O."/>
            <person name="Dinh H.H."/>
            <person name="Draper H."/>
            <person name="Gonzalez-Garay M.L."/>
            <person name="Havlak P."/>
            <person name="Jackson L.R."/>
            <person name="Jacob L.S."/>
            <person name="Kelly S.H."/>
            <person name="Li L."/>
            <person name="Li Z."/>
            <person name="Liu J."/>
            <person name="Liu W."/>
            <person name="Lu J."/>
            <person name="Maheshwari M."/>
            <person name="Nguyen B.-V."/>
            <person name="Okwuonu G.O."/>
            <person name="Pasternak S."/>
            <person name="Perez L.M."/>
            <person name="Plopper F.J.H."/>
            <person name="Santibanez J."/>
            <person name="Shen H."/>
            <person name="Tabor P.E."/>
            <person name="Verduzco D."/>
            <person name="Waldron L."/>
            <person name="Wang Q."/>
            <person name="Williams G.A."/>
            <person name="Zhang J."/>
            <person name="Zhou J."/>
            <person name="Allen C.C."/>
            <person name="Amin A.G."/>
            <person name="Anyalebechi V."/>
            <person name="Bailey M."/>
            <person name="Barbaria J.A."/>
            <person name="Bimage K.E."/>
            <person name="Bryant N.P."/>
            <person name="Burch P.E."/>
            <person name="Burkett C.E."/>
            <person name="Burrell K.L."/>
            <person name="Calderon E."/>
            <person name="Cardenas V."/>
            <person name="Carter K."/>
            <person name="Casias K."/>
            <person name="Cavazos I."/>
            <person name="Cavazos S.R."/>
            <person name="Ceasar H."/>
            <person name="Chacko J."/>
            <person name="Chan S.N."/>
            <person name="Chavez D."/>
            <person name="Christopoulos C."/>
            <person name="Chu J."/>
            <person name="Cockrell R."/>
            <person name="Cox C.D."/>
            <person name="Dang M."/>
            <person name="Dathorne S.R."/>
            <person name="David R."/>
            <person name="Davis C.M."/>
            <person name="Davy-Carroll L."/>
            <person name="Deshazo D.R."/>
            <person name="Donlin J.E."/>
            <person name="D'Souza L."/>
            <person name="Eaves K.A."/>
            <person name="Egan A."/>
            <person name="Emery-Cohen A.J."/>
            <person name="Escotto M."/>
            <person name="Flagg N."/>
            <person name="Forbes L.D."/>
            <person name="Gabisi A.M."/>
            <person name="Garza M."/>
            <person name="Hamilton C."/>
            <person name="Henderson N."/>
            <person name="Hernandez O."/>
            <person name="Hines S."/>
            <person name="Hogues M.E."/>
            <person name="Huang M."/>
            <person name="Idlebird D.G."/>
            <person name="Johnson R."/>
            <person name="Jolivet A."/>
            <person name="Jones S."/>
            <person name="Kagan R."/>
            <person name="King L.M."/>
            <person name="Leal B."/>
            <person name="Lebow H."/>
            <person name="Lee S."/>
            <person name="LeVan J.M."/>
            <person name="Lewis L.C."/>
            <person name="London P."/>
            <person name="Lorensuhewa L.M."/>
            <person name="Loulseged H."/>
            <person name="Lovett D.A."/>
            <person name="Lucier A."/>
            <person name="Lucier R.L."/>
            <person name="Ma J."/>
            <person name="Madu R.C."/>
            <person name="Mapua P."/>
            <person name="Martindale A.D."/>
            <person name="Martinez E."/>
            <person name="Massey E."/>
            <person name="Mawhiney S."/>
            <person name="Meador M.G."/>
            <person name="Mendez S."/>
            <person name="Mercado C."/>
            <person name="Mercado I.C."/>
            <person name="Merritt C.E."/>
            <person name="Miner Z.L."/>
            <person name="Minja E."/>
            <person name="Mitchell T."/>
            <person name="Mohabbat F."/>
            <person name="Mohabbat K."/>
            <person name="Montgomery B."/>
            <person name="Moore N."/>
            <person name="Morris S."/>
            <person name="Munidasa M."/>
            <person name="Ngo R.N."/>
            <person name="Nguyen N.B."/>
            <person name="Nickerson E."/>
            <person name="Nwaokelemeh O.O."/>
            <person name="Nwokenkwo S."/>
            <person name="Obregon M."/>
            <person name="Oguh M."/>
            <person name="Oragunye N."/>
            <person name="Oviedo R.J."/>
            <person name="Parish B.J."/>
            <person name="Parker D.N."/>
            <person name="Parrish J."/>
            <person name="Parks K.L."/>
            <person name="Paul H.A."/>
            <person name="Payton B.A."/>
            <person name="Perez A."/>
            <person name="Perrin W."/>
            <person name="Pickens A."/>
            <person name="Primus E.L."/>
            <person name="Pu L.-L."/>
            <person name="Puazo M."/>
            <person name="Quiles M.M."/>
            <person name="Quiroz J.B."/>
            <person name="Rabata D."/>
            <person name="Reeves K."/>
            <person name="Ruiz S.J."/>
            <person name="Shao H."/>
            <person name="Sisson I."/>
            <person name="Sonaike T."/>
            <person name="Sorelle R.P."/>
            <person name="Sutton A.E."/>
            <person name="Svatek A.F."/>
            <person name="Svetz L.A."/>
            <person name="Tamerisa K.S."/>
            <person name="Taylor T.R."/>
            <person name="Teague B."/>
            <person name="Thomas N."/>
            <person name="Thorn R.D."/>
            <person name="Trejos Z.Y."/>
            <person name="Trevino B.K."/>
            <person name="Ukegbu O.N."/>
            <person name="Urban J.B."/>
            <person name="Vasquez L.I."/>
            <person name="Vera V.A."/>
            <person name="Villasana D.M."/>
            <person name="Wang L."/>
            <person name="Ward-Moore S."/>
            <person name="Warren J.T."/>
            <person name="Wei X."/>
            <person name="White F."/>
            <person name="Williamson A.L."/>
            <person name="Wleczyk R."/>
            <person name="Wooden H.S."/>
            <person name="Wooden S.H."/>
            <person name="Yen J."/>
            <person name="Yoon L."/>
            <person name="Yoon V."/>
            <person name="Zorrilla S.E."/>
            <person name="Nelson D."/>
            <person name="Kucherlapati R."/>
            <person name="Weinstock G."/>
            <person name="Gibbs R.A."/>
        </authorList>
    </citation>
    <scope>NUCLEOTIDE SEQUENCE [LARGE SCALE GENOMIC DNA]</scope>
</reference>
<reference key="4">
    <citation type="submission" date="2005-09" db="EMBL/GenBank/DDBJ databases">
        <authorList>
            <person name="Mural R.J."/>
            <person name="Istrail S."/>
            <person name="Sutton G.G."/>
            <person name="Florea L."/>
            <person name="Halpern A.L."/>
            <person name="Mobarry C.M."/>
            <person name="Lippert R."/>
            <person name="Walenz B."/>
            <person name="Shatkay H."/>
            <person name="Dew I."/>
            <person name="Miller J.R."/>
            <person name="Flanigan M.J."/>
            <person name="Edwards N.J."/>
            <person name="Bolanos R."/>
            <person name="Fasulo D."/>
            <person name="Halldorsson B.V."/>
            <person name="Hannenhalli S."/>
            <person name="Turner R."/>
            <person name="Yooseph S."/>
            <person name="Lu F."/>
            <person name="Nusskern D.R."/>
            <person name="Shue B.C."/>
            <person name="Zheng X.H."/>
            <person name="Zhong F."/>
            <person name="Delcher A.L."/>
            <person name="Huson D.H."/>
            <person name="Kravitz S.A."/>
            <person name="Mouchard L."/>
            <person name="Reinert K."/>
            <person name="Remington K.A."/>
            <person name="Clark A.G."/>
            <person name="Waterman M.S."/>
            <person name="Eichler E.E."/>
            <person name="Adams M.D."/>
            <person name="Hunkapiller M.W."/>
            <person name="Myers E.W."/>
            <person name="Venter J.C."/>
        </authorList>
    </citation>
    <scope>NUCLEOTIDE SEQUENCE [LARGE SCALE GENOMIC DNA]</scope>
</reference>
<reference key="5">
    <citation type="journal article" date="2004" name="Genome Res.">
        <title>The status, quality, and expansion of the NIH full-length cDNA project: the Mammalian Gene Collection (MGC).</title>
        <authorList>
            <consortium name="The MGC Project Team"/>
        </authorList>
    </citation>
    <scope>NUCLEOTIDE SEQUENCE [LARGE SCALE MRNA] (ISOFORM 3)</scope>
    <source>
        <tissue>Testis</tissue>
    </source>
</reference>
<reference key="6">
    <citation type="journal article" date="1997" name="Hum. Genet.">
        <title>cDNAs with long CAG trinucleotide repeats from human brain.</title>
        <authorList>
            <person name="Margolis R.L."/>
            <person name="Abraham M.R."/>
            <person name="Gatchell S.B."/>
            <person name="Li S.-H."/>
            <person name="Kidwai A.S."/>
            <person name="Breschel T.S."/>
            <person name="Stine O.C."/>
            <person name="Callahan C."/>
            <person name="McInnis M.G."/>
            <person name="Ross C.A."/>
        </authorList>
    </citation>
    <scope>NUCLEOTIDE SEQUENCE [MRNA] OF 395-577 (ISOFORMS 1/2/3)</scope>
    <source>
        <tissue>Brain cortex</tissue>
    </source>
</reference>
<reference key="7">
    <citation type="journal article" date="2008" name="Proc. Natl. Acad. Sci. U.S.A.">
        <title>A quantitative atlas of mitotic phosphorylation.</title>
        <authorList>
            <person name="Dephoure N."/>
            <person name="Zhou C."/>
            <person name="Villen J."/>
            <person name="Beausoleil S.A."/>
            <person name="Bakalarski C.E."/>
            <person name="Elledge S.J."/>
            <person name="Gygi S.P."/>
        </authorList>
    </citation>
    <scope>PHOSPHORYLATION [LARGE SCALE ANALYSIS] AT SER-214</scope>
    <scope>IDENTIFICATION BY MASS SPECTROMETRY [LARGE SCALE ANALYSIS]</scope>
    <source>
        <tissue>Cervix carcinoma</tissue>
    </source>
</reference>
<reference key="8">
    <citation type="journal article" date="2010" name="Sci. Signal.">
        <title>Quantitative phosphoproteomics reveals widespread full phosphorylation site occupancy during mitosis.</title>
        <authorList>
            <person name="Olsen J.V."/>
            <person name="Vermeulen M."/>
            <person name="Santamaria A."/>
            <person name="Kumar C."/>
            <person name="Miller M.L."/>
            <person name="Jensen L.J."/>
            <person name="Gnad F."/>
            <person name="Cox J."/>
            <person name="Jensen T.S."/>
            <person name="Nigg E.A."/>
            <person name="Brunak S."/>
            <person name="Mann M."/>
        </authorList>
    </citation>
    <scope>PHOSPHORYLATION [LARGE SCALE ANALYSIS] AT SER-214</scope>
    <scope>IDENTIFICATION BY MASS SPECTROMETRY [LARGE SCALE ANALYSIS]</scope>
    <source>
        <tissue>Cervix carcinoma</tissue>
    </source>
</reference>
<protein>
    <recommendedName>
        <fullName>Zinc finger protein 384</fullName>
    </recommendedName>
    <alternativeName>
        <fullName>CAG repeat protein 1</fullName>
    </alternativeName>
    <alternativeName>
        <fullName>CAS-interacting zinc finger protein</fullName>
    </alternativeName>
    <alternativeName>
        <fullName>Nuclear matrix transcription factor 4</fullName>
        <shortName>Nuclear matrix protein 4</shortName>
    </alternativeName>
    <alternativeName>
        <fullName>Trinucleotide repeat-containing gene 1 protein</fullName>
    </alternativeName>
</protein>
<sequence length="577" mass="63219">MEESHFNSNPYFWPSIPTVSGQIENTMFINKMKDQLLPEKGCGLAPPHYPTLLTVPASVSLPSGISMDTESKSDQLTPHSQASVTQNITVVPVPSTGLMTAGVSCSQRWRREGSQSRGPGLVITSPSGSLVTTASSAQTFPISAPMIVSALPPGSQALQVVPDLSKKVASTLTEEGGGGGGGGGSVAPKPPRGRKKKRMLESGLPEMNDPYVLSPEDDDDHQKDGKTYRCRMCSLTFYSKSEMQIHSKSHTETKPHKCPHCSKTFANSSYLAQHIRIHSGAKPYSCNFCEKSFRQLSHLQQHTRIHSKMHTETIKPHKCPHCSKTFANTSYLAQHLRIHSGAKPYNCSYCQKAFRQLSHLQQHTRIHTGDRPYKCAHPGCEKAFTQLSNLQSHRRQHNKDKPFKCHNCHRAYTDAASLEVHLSTHTVKHAKVYTCTICSRAYTSETYLMKHMRKHNPPDLQQQVQAAAAAAAVAQAQAQAQAQAQAQAQAQAQAQASQASQQQQQQQQQQQQQQQQPPPHFQSPGAAPQGGGGGDSNPNPPPQCSFDLTPYKTAEHHKDICLTVTTSTIQVEHLASS</sequence>
<keyword id="KW-0025">Alternative splicing</keyword>
<keyword id="KW-0238">DNA-binding</keyword>
<keyword id="KW-0479">Metal-binding</keyword>
<keyword id="KW-0539">Nucleus</keyword>
<keyword id="KW-0597">Phosphoprotein</keyword>
<keyword id="KW-1267">Proteomics identification</keyword>
<keyword id="KW-1185">Reference proteome</keyword>
<keyword id="KW-0677">Repeat</keyword>
<keyword id="KW-0804">Transcription</keyword>
<keyword id="KW-0805">Transcription regulation</keyword>
<keyword id="KW-0862">Zinc</keyword>
<keyword id="KW-0863">Zinc-finger</keyword>
<evidence type="ECO:0000250" key="1"/>
<evidence type="ECO:0000255" key="2">
    <source>
        <dbReference type="PROSITE-ProRule" id="PRU00042"/>
    </source>
</evidence>
<evidence type="ECO:0000256" key="3">
    <source>
        <dbReference type="SAM" id="MobiDB-lite"/>
    </source>
</evidence>
<evidence type="ECO:0000303" key="4">
    <source>
    </source>
</evidence>
<evidence type="ECO:0000303" key="5">
    <source>
    </source>
</evidence>
<evidence type="ECO:0000305" key="6"/>
<evidence type="ECO:0007744" key="7">
    <source>
    </source>
</evidence>
<evidence type="ECO:0007744" key="8">
    <source>
    </source>
</evidence>
<feature type="chain" id="PRO_0000047552" description="Zinc finger protein 384">
    <location>
        <begin position="1"/>
        <end position="577"/>
    </location>
</feature>
<feature type="zinc finger region" description="C2H2-type 1" evidence="2">
    <location>
        <begin position="228"/>
        <end position="250"/>
    </location>
</feature>
<feature type="zinc finger region" description="C2H2-type 2" evidence="2">
    <location>
        <begin position="256"/>
        <end position="278"/>
    </location>
</feature>
<feature type="zinc finger region" description="C2H2-type 3" evidence="2">
    <location>
        <begin position="284"/>
        <end position="306"/>
    </location>
</feature>
<feature type="zinc finger region" description="C2H2-type 4" evidence="2">
    <location>
        <begin position="317"/>
        <end position="339"/>
    </location>
</feature>
<feature type="zinc finger region" description="C2H2-type 5" evidence="2">
    <location>
        <begin position="345"/>
        <end position="367"/>
    </location>
</feature>
<feature type="zinc finger region" description="C2H2-type 6" evidence="2">
    <location>
        <begin position="373"/>
        <end position="397"/>
    </location>
</feature>
<feature type="zinc finger region" description="C2H2-type 7" evidence="2">
    <location>
        <begin position="403"/>
        <end position="425"/>
    </location>
</feature>
<feature type="zinc finger region" description="C2H2-type 8" evidence="2">
    <location>
        <begin position="433"/>
        <end position="455"/>
    </location>
</feature>
<feature type="region of interest" description="Disordered" evidence="3">
    <location>
        <begin position="171"/>
        <end position="225"/>
    </location>
</feature>
<feature type="region of interest" description="Disordered" evidence="3">
    <location>
        <begin position="501"/>
        <end position="550"/>
    </location>
</feature>
<feature type="compositionally biased region" description="Gly residues" evidence="3">
    <location>
        <begin position="175"/>
        <end position="185"/>
    </location>
</feature>
<feature type="compositionally biased region" description="Low complexity" evidence="3">
    <location>
        <begin position="501"/>
        <end position="515"/>
    </location>
</feature>
<feature type="modified residue" description="Phosphoserine" evidence="7 8">
    <location>
        <position position="214"/>
    </location>
</feature>
<feature type="splice variant" id="VSP_040314" description="In isoform 3." evidence="5">
    <location>
        <begin position="102"/>
        <end position="156"/>
    </location>
</feature>
<feature type="splice variant" id="VSP_040315" description="In isoform 3." evidence="5">
    <location>
        <begin position="293"/>
        <end position="353"/>
    </location>
</feature>
<feature type="splice variant" id="VSP_006920" description="In isoform 2." evidence="4">
    <location>
        <begin position="300"/>
        <end position="360"/>
    </location>
</feature>
<feature type="sequence conflict" description="In Ref. 1; BAB85125, 2; BAC04618, 4; EAW88756, 5; AAH53361 and 6; AAB91437." evidence="6" ref="1 2 4 5 6">
    <location>
        <position position="501"/>
    </location>
</feature>
<organism>
    <name type="scientific">Homo sapiens</name>
    <name type="common">Human</name>
    <dbReference type="NCBI Taxonomy" id="9606"/>
    <lineage>
        <taxon>Eukaryota</taxon>
        <taxon>Metazoa</taxon>
        <taxon>Chordata</taxon>
        <taxon>Craniata</taxon>
        <taxon>Vertebrata</taxon>
        <taxon>Euteleostomi</taxon>
        <taxon>Mammalia</taxon>
        <taxon>Eutheria</taxon>
        <taxon>Euarchontoglires</taxon>
        <taxon>Primates</taxon>
        <taxon>Haplorrhini</taxon>
        <taxon>Catarrhini</taxon>
        <taxon>Hominidae</taxon>
        <taxon>Homo</taxon>
    </lineage>
</organism>
<gene>
    <name type="primary">ZNF384</name>
    <name type="synonym">CAGH1</name>
    <name type="synonym">CIZ</name>
    <name type="synonym">NMP4</name>
    <name type="synonym">TNRC1</name>
</gene>
<name>ZN384_HUMAN</name>